<proteinExistence type="inferred from homology"/>
<gene>
    <name type="primary">hoxa13b</name>
</gene>
<accession>Q1KKZ6</accession>
<keyword id="KW-0217">Developmental protein</keyword>
<keyword id="KW-0238">DNA-binding</keyword>
<keyword id="KW-0371">Homeobox</keyword>
<keyword id="KW-0539">Nucleus</keyword>
<keyword id="KW-1185">Reference proteome</keyword>
<keyword id="KW-0804">Transcription</keyword>
<keyword id="KW-0805">Transcription regulation</keyword>
<feature type="chain" id="PRO_0000265974" description="Homeobox protein Hox-A13b">
    <location>
        <begin position="1"/>
        <end position="285"/>
    </location>
</feature>
<feature type="DNA-binding region" description="Homeobox" evidence="2">
    <location>
        <begin position="219"/>
        <end position="278"/>
    </location>
</feature>
<evidence type="ECO:0000250" key="1"/>
<evidence type="ECO:0000255" key="2">
    <source>
        <dbReference type="PROSITE-ProRule" id="PRU00108"/>
    </source>
</evidence>
<evidence type="ECO:0000305" key="3"/>
<comment type="function">
    <text evidence="1">Sequence-specific transcription factor which is part of a developmental regulatory system that provides cells with specific positional identities on the anterior-posterior axis.</text>
</comment>
<comment type="subcellular location">
    <subcellularLocation>
        <location evidence="2">Nucleus</location>
    </subcellularLocation>
</comment>
<comment type="similarity">
    <text evidence="3">Belongs to the Abd-B homeobox family.</text>
</comment>
<reference key="1">
    <citation type="journal article" date="2006" name="Proc. Natl. Acad. Sci. U.S.A.">
        <title>Highly conserved syntenic blocks at the vertebrate Hox loci and conserved regulatory elements within and outside Hox gene clusters.</title>
        <authorList>
            <person name="Lee A.P."/>
            <person name="Koh E.G.L."/>
            <person name="Tay A."/>
            <person name="Brenner S."/>
            <person name="Venkatesh B."/>
        </authorList>
    </citation>
    <scope>NUCLEOTIDE SEQUENCE [GENOMIC DNA]</scope>
</reference>
<name>HXADB_TAKRU</name>
<organism>
    <name type="scientific">Takifugu rubripes</name>
    <name type="common">Japanese pufferfish</name>
    <name type="synonym">Fugu rubripes</name>
    <dbReference type="NCBI Taxonomy" id="31033"/>
    <lineage>
        <taxon>Eukaryota</taxon>
        <taxon>Metazoa</taxon>
        <taxon>Chordata</taxon>
        <taxon>Craniata</taxon>
        <taxon>Vertebrata</taxon>
        <taxon>Euteleostomi</taxon>
        <taxon>Actinopterygii</taxon>
        <taxon>Neopterygii</taxon>
        <taxon>Teleostei</taxon>
        <taxon>Neoteleostei</taxon>
        <taxon>Acanthomorphata</taxon>
        <taxon>Eupercaria</taxon>
        <taxon>Tetraodontiformes</taxon>
        <taxon>Tetradontoidea</taxon>
        <taxon>Tetraodontidae</taxon>
        <taxon>Takifugu</taxon>
    </lineage>
</organism>
<dbReference type="EMBL" id="DQ481664">
    <property type="protein sequence ID" value="ABF22398.1"/>
    <property type="molecule type" value="Genomic_DNA"/>
</dbReference>
<dbReference type="SMR" id="Q1KKZ6"/>
<dbReference type="FunCoup" id="Q1KKZ6">
    <property type="interactions" value="788"/>
</dbReference>
<dbReference type="eggNOG" id="KOG0487">
    <property type="taxonomic scope" value="Eukaryota"/>
</dbReference>
<dbReference type="InParanoid" id="Q1KKZ6"/>
<dbReference type="Proteomes" id="UP000005226">
    <property type="component" value="Unplaced"/>
</dbReference>
<dbReference type="GO" id="GO:0005634">
    <property type="term" value="C:nucleus"/>
    <property type="evidence" value="ECO:0007669"/>
    <property type="project" value="UniProtKB-SubCell"/>
</dbReference>
<dbReference type="GO" id="GO:0003677">
    <property type="term" value="F:DNA binding"/>
    <property type="evidence" value="ECO:0007669"/>
    <property type="project" value="UniProtKB-KW"/>
</dbReference>
<dbReference type="GO" id="GO:0000981">
    <property type="term" value="F:DNA-binding transcription factor activity, RNA polymerase II-specific"/>
    <property type="evidence" value="ECO:0007669"/>
    <property type="project" value="InterPro"/>
</dbReference>
<dbReference type="CDD" id="cd00086">
    <property type="entry name" value="homeodomain"/>
    <property type="match status" value="1"/>
</dbReference>
<dbReference type="FunFam" id="1.10.10.60:FF:000084">
    <property type="entry name" value="Homeobox protein Hox-D13"/>
    <property type="match status" value="1"/>
</dbReference>
<dbReference type="Gene3D" id="1.10.10.60">
    <property type="entry name" value="Homeodomain-like"/>
    <property type="match status" value="1"/>
</dbReference>
<dbReference type="InterPro" id="IPR051003">
    <property type="entry name" value="AP_axis_regulatory_Homeobox"/>
</dbReference>
<dbReference type="InterPro" id="IPR001356">
    <property type="entry name" value="HD"/>
</dbReference>
<dbReference type="InterPro" id="IPR017970">
    <property type="entry name" value="Homeobox_CS"/>
</dbReference>
<dbReference type="InterPro" id="IPR009057">
    <property type="entry name" value="Homeodomain-like_sf"/>
</dbReference>
<dbReference type="InterPro" id="IPR022067">
    <property type="entry name" value="HoxA13_N"/>
</dbReference>
<dbReference type="PANTHER" id="PTHR45804:SF9">
    <property type="entry name" value="HOMEOBOX PROTEIN HOX-A13A-RELATED"/>
    <property type="match status" value="1"/>
</dbReference>
<dbReference type="PANTHER" id="PTHR45804">
    <property type="entry name" value="SEGMENTATION PROTEIN FUSHI TARAZU-LIKE PROTEIN"/>
    <property type="match status" value="1"/>
</dbReference>
<dbReference type="Pfam" id="PF00046">
    <property type="entry name" value="Homeodomain"/>
    <property type="match status" value="1"/>
</dbReference>
<dbReference type="Pfam" id="PF12284">
    <property type="entry name" value="HoxA13_N"/>
    <property type="match status" value="1"/>
</dbReference>
<dbReference type="SMART" id="SM00389">
    <property type="entry name" value="HOX"/>
    <property type="match status" value="1"/>
</dbReference>
<dbReference type="SUPFAM" id="SSF46689">
    <property type="entry name" value="Homeodomain-like"/>
    <property type="match status" value="1"/>
</dbReference>
<dbReference type="PROSITE" id="PS00027">
    <property type="entry name" value="HOMEOBOX_1"/>
    <property type="match status" value="1"/>
</dbReference>
<dbReference type="PROSITE" id="PS50071">
    <property type="entry name" value="HOMEOBOX_2"/>
    <property type="match status" value="1"/>
</dbReference>
<sequence length="285" mass="32056">MTASVLLHSHWIDPVMFLYENGLDERNKNMEGFTGSNFPANQCRNLLAHPTSLAPNTTYTSNDVPISGIGEPGKQCSPCPATQSSPNASLPYGYFGSSYYPCRVSHGSVKACAQPSGYGDKYMDSPVSGEEFSSRAKEYAFYQGYSSAPYQPSYLDVPVVPALSAPSETRHEPLLPMEPYQPWTITNGWSGQVYCTKEQPQSNPLWKSSLQGNSGVRRGRKKRVPYTKVQLKELEREYAANKFITKDKRRRISAQTNLTERQVTIWFQNRRVKEKKVVNKFKSPS</sequence>
<protein>
    <recommendedName>
        <fullName>Homeobox protein Hox-A13b</fullName>
    </recommendedName>
</protein>